<dbReference type="EMBL" id="CP000708">
    <property type="protein sequence ID" value="ABQ60954.1"/>
    <property type="molecule type" value="Genomic_DNA"/>
</dbReference>
<dbReference type="RefSeq" id="WP_004687882.1">
    <property type="nucleotide sequence ID" value="NC_009505.1"/>
</dbReference>
<dbReference type="SMR" id="A5VN89"/>
<dbReference type="KEGG" id="bov:BOV_0148"/>
<dbReference type="HOGENOM" id="CLU_105066_2_0_5"/>
<dbReference type="Proteomes" id="UP000006383">
    <property type="component" value="Chromosome I"/>
</dbReference>
<dbReference type="GO" id="GO:0005694">
    <property type="term" value="C:chromosome"/>
    <property type="evidence" value="ECO:0007669"/>
    <property type="project" value="InterPro"/>
</dbReference>
<dbReference type="GO" id="GO:0005829">
    <property type="term" value="C:cytosol"/>
    <property type="evidence" value="ECO:0007669"/>
    <property type="project" value="TreeGrafter"/>
</dbReference>
<dbReference type="GO" id="GO:0003677">
    <property type="term" value="F:DNA binding"/>
    <property type="evidence" value="ECO:0007669"/>
    <property type="project" value="UniProtKB-UniRule"/>
</dbReference>
<dbReference type="GO" id="GO:0030527">
    <property type="term" value="F:structural constituent of chromatin"/>
    <property type="evidence" value="ECO:0007669"/>
    <property type="project" value="InterPro"/>
</dbReference>
<dbReference type="GO" id="GO:0006310">
    <property type="term" value="P:DNA recombination"/>
    <property type="evidence" value="ECO:0007669"/>
    <property type="project" value="UniProtKB-UniRule"/>
</dbReference>
<dbReference type="GO" id="GO:0006355">
    <property type="term" value="P:regulation of DNA-templated transcription"/>
    <property type="evidence" value="ECO:0007669"/>
    <property type="project" value="UniProtKB-UniRule"/>
</dbReference>
<dbReference type="GO" id="GO:0006417">
    <property type="term" value="P:regulation of translation"/>
    <property type="evidence" value="ECO:0007669"/>
    <property type="project" value="UniProtKB-UniRule"/>
</dbReference>
<dbReference type="CDD" id="cd13836">
    <property type="entry name" value="IHF_B"/>
    <property type="match status" value="1"/>
</dbReference>
<dbReference type="Gene3D" id="4.10.520.10">
    <property type="entry name" value="IHF-like DNA-binding proteins"/>
    <property type="match status" value="1"/>
</dbReference>
<dbReference type="HAMAP" id="MF_00381">
    <property type="entry name" value="IHF_beta"/>
    <property type="match status" value="1"/>
</dbReference>
<dbReference type="InterPro" id="IPR000119">
    <property type="entry name" value="Hist_DNA-bd"/>
</dbReference>
<dbReference type="InterPro" id="IPR020816">
    <property type="entry name" value="Histone-like_DNA-bd_CS"/>
</dbReference>
<dbReference type="InterPro" id="IPR010992">
    <property type="entry name" value="IHF-like_DNA-bd_dom_sf"/>
</dbReference>
<dbReference type="InterPro" id="IPR005685">
    <property type="entry name" value="IHF_beta"/>
</dbReference>
<dbReference type="NCBIfam" id="TIGR00988">
    <property type="entry name" value="hip"/>
    <property type="match status" value="1"/>
</dbReference>
<dbReference type="NCBIfam" id="NF001222">
    <property type="entry name" value="PRK00199.1"/>
    <property type="match status" value="1"/>
</dbReference>
<dbReference type="PANTHER" id="PTHR33175">
    <property type="entry name" value="DNA-BINDING PROTEIN HU"/>
    <property type="match status" value="1"/>
</dbReference>
<dbReference type="PANTHER" id="PTHR33175:SF5">
    <property type="entry name" value="INTEGRATION HOST FACTOR SUBUNIT BETA"/>
    <property type="match status" value="1"/>
</dbReference>
<dbReference type="Pfam" id="PF00216">
    <property type="entry name" value="Bac_DNA_binding"/>
    <property type="match status" value="1"/>
</dbReference>
<dbReference type="PRINTS" id="PR01727">
    <property type="entry name" value="DNABINDINGHU"/>
</dbReference>
<dbReference type="SMART" id="SM00411">
    <property type="entry name" value="BHL"/>
    <property type="match status" value="1"/>
</dbReference>
<dbReference type="SUPFAM" id="SSF47729">
    <property type="entry name" value="IHF-like DNA-binding proteins"/>
    <property type="match status" value="1"/>
</dbReference>
<dbReference type="PROSITE" id="PS00045">
    <property type="entry name" value="HISTONE_LIKE"/>
    <property type="match status" value="1"/>
</dbReference>
<keyword id="KW-0233">DNA recombination</keyword>
<keyword id="KW-0238">DNA-binding</keyword>
<keyword id="KW-0804">Transcription</keyword>
<keyword id="KW-0805">Transcription regulation</keyword>
<keyword id="KW-0810">Translation regulation</keyword>
<protein>
    <recommendedName>
        <fullName evidence="1">Integration host factor subunit beta</fullName>
        <shortName evidence="1">IHF-beta</shortName>
    </recommendedName>
</protein>
<evidence type="ECO:0000255" key="1">
    <source>
        <dbReference type="HAMAP-Rule" id="MF_00381"/>
    </source>
</evidence>
<comment type="function">
    <text evidence="1">This protein is one of the two subunits of integration host factor, a specific DNA-binding protein that functions in genetic recombination as well as in transcriptional and translational control.</text>
</comment>
<comment type="subunit">
    <text evidence="1">Heterodimer of an alpha and a beta chain.</text>
</comment>
<comment type="similarity">
    <text evidence="1">Belongs to the bacterial histone-like protein family.</text>
</comment>
<proteinExistence type="inferred from homology"/>
<reference key="1">
    <citation type="journal article" date="2009" name="PLoS ONE">
        <title>Genome degradation in Brucella ovis corresponds with narrowing of its host range and tissue tropism.</title>
        <authorList>
            <person name="Tsolis R.M."/>
            <person name="Seshadri R."/>
            <person name="Santos R.L."/>
            <person name="Sangari F.J."/>
            <person name="Lobo J.M."/>
            <person name="de Jong M.F."/>
            <person name="Ren Q."/>
            <person name="Myers G."/>
            <person name="Brinkac L.M."/>
            <person name="Nelson W.C."/>
            <person name="Deboy R.T."/>
            <person name="Angiuoli S."/>
            <person name="Khouri H."/>
            <person name="Dimitrov G."/>
            <person name="Robinson J.R."/>
            <person name="Mulligan S."/>
            <person name="Walker R.L."/>
            <person name="Elzer P.E."/>
            <person name="Hassan K.A."/>
            <person name="Paulsen I.T."/>
        </authorList>
    </citation>
    <scope>NUCLEOTIDE SEQUENCE [LARGE SCALE GENOMIC DNA]</scope>
    <source>
        <strain>ATCC 25840 / 63/290 / NCTC 10512</strain>
    </source>
</reference>
<name>IHFB_BRUO2</name>
<organism>
    <name type="scientific">Brucella ovis (strain ATCC 25840 / 63/290 / NCTC 10512)</name>
    <dbReference type="NCBI Taxonomy" id="444178"/>
    <lineage>
        <taxon>Bacteria</taxon>
        <taxon>Pseudomonadati</taxon>
        <taxon>Pseudomonadota</taxon>
        <taxon>Alphaproteobacteria</taxon>
        <taxon>Hyphomicrobiales</taxon>
        <taxon>Brucellaceae</taxon>
        <taxon>Brucella/Ochrobactrum group</taxon>
        <taxon>Brucella</taxon>
    </lineage>
</organism>
<gene>
    <name evidence="1" type="primary">ihfB</name>
    <name evidence="1" type="synonym">himD</name>
    <name type="ordered locus">BOV_0148</name>
</gene>
<accession>A5VN89</accession>
<feature type="chain" id="PRO_1000060591" description="Integration host factor subunit beta">
    <location>
        <begin position="1"/>
        <end position="94"/>
    </location>
</feature>
<sequence>MIKSELVQIIASRNPHLFQRDVENIVGAVFDEITNALAEGNRVELRGFGAFSVKNRPARSGRNPRTGETVDVEEKWVPFFKTGKELRDRLNGAV</sequence>